<proteinExistence type="evidence at protein level"/>
<organism>
    <name type="scientific">Arabidopsis thaliana</name>
    <name type="common">Mouse-ear cress</name>
    <dbReference type="NCBI Taxonomy" id="3702"/>
    <lineage>
        <taxon>Eukaryota</taxon>
        <taxon>Viridiplantae</taxon>
        <taxon>Streptophyta</taxon>
        <taxon>Embryophyta</taxon>
        <taxon>Tracheophyta</taxon>
        <taxon>Spermatophyta</taxon>
        <taxon>Magnoliopsida</taxon>
        <taxon>eudicotyledons</taxon>
        <taxon>Gunneridae</taxon>
        <taxon>Pentapetalae</taxon>
        <taxon>rosids</taxon>
        <taxon>malvids</taxon>
        <taxon>Brassicales</taxon>
        <taxon>Brassicaceae</taxon>
        <taxon>Camelineae</taxon>
        <taxon>Arabidopsis</taxon>
    </lineage>
</organism>
<comment type="function">
    <text evidence="5">Acts as a GTPase activator for the Rac-type GTPase by converting it to an inactive GDP-bound state. Maintains the global inactivation of ARAC11/ROP1 at the apex in pollen tubes in order to regulate the polar cell growth.</text>
</comment>
<comment type="subunit">
    <text evidence="5">Interacts with ARAC11/ROP1.</text>
</comment>
<comment type="subcellular location">
    <subcellularLocation>
        <location evidence="7">Cell membrane</location>
        <topology evidence="7">Peripheral membrane protein</topology>
    </subcellularLocation>
    <text>Localizes to the apical plasma membrane and accumulates in the clear zone of growing pollen tubes.</text>
</comment>
<comment type="tissue specificity">
    <text evidence="5">Expressed in pollen and pollen tubes.</text>
</comment>
<comment type="disruption phenotype">
    <text evidence="5">Male gametophyte defect characterized by sterile pollen grains developing balloon-like tubes.</text>
</comment>
<comment type="sequence caution" evidence="6">
    <conflict type="erroneous gene model prediction">
        <sequence resource="EMBL-CDS" id="CAA23005"/>
    </conflict>
</comment>
<comment type="sequence caution" evidence="6">
    <conflict type="erroneous gene model prediction">
        <sequence resource="EMBL-CDS" id="CAB79368"/>
    </conflict>
</comment>
<accession>F4JQZ3</accession>
<accession>Q9SB53</accession>
<dbReference type="EMBL" id="AL035356">
    <property type="protein sequence ID" value="CAA23005.1"/>
    <property type="status" value="ALT_SEQ"/>
    <property type="molecule type" value="Genomic_DNA"/>
</dbReference>
<dbReference type="EMBL" id="AL161561">
    <property type="protein sequence ID" value="CAB79368.1"/>
    <property type="status" value="ALT_SEQ"/>
    <property type="molecule type" value="Genomic_DNA"/>
</dbReference>
<dbReference type="EMBL" id="CP002687">
    <property type="protein sequence ID" value="AEE84928.2"/>
    <property type="molecule type" value="Genomic_DNA"/>
</dbReference>
<dbReference type="EMBL" id="CP002687">
    <property type="protein sequence ID" value="ANM68131.1"/>
    <property type="molecule type" value="Genomic_DNA"/>
</dbReference>
<dbReference type="PIR" id="T05576">
    <property type="entry name" value="T05576"/>
</dbReference>
<dbReference type="RefSeq" id="NP_001320057.1">
    <property type="nucleotide sequence ID" value="NM_001341680.1"/>
</dbReference>
<dbReference type="RefSeq" id="NP_001329908.1">
    <property type="nucleotide sequence ID" value="NM_001341681.1"/>
</dbReference>
<dbReference type="SMR" id="F4JQZ3"/>
<dbReference type="FunCoup" id="F4JQZ3">
    <property type="interactions" value="82"/>
</dbReference>
<dbReference type="STRING" id="3702.F4JQZ3"/>
<dbReference type="GlyGen" id="F4JQZ3">
    <property type="glycosylation" value="1 site"/>
</dbReference>
<dbReference type="iPTMnet" id="F4JQZ3"/>
<dbReference type="PaxDb" id="3702-AT4G24580.1"/>
<dbReference type="ProteomicsDB" id="236257"/>
<dbReference type="EnsemblPlants" id="AT4G24580.1">
    <property type="protein sequence ID" value="AT4G24580.1"/>
    <property type="gene ID" value="AT4G24580"/>
</dbReference>
<dbReference type="EnsemblPlants" id="AT4G24580.2">
    <property type="protein sequence ID" value="AT4G24580.2"/>
    <property type="gene ID" value="AT4G24580"/>
</dbReference>
<dbReference type="GeneID" id="828560"/>
<dbReference type="Gramene" id="AT4G24580.1">
    <property type="protein sequence ID" value="AT4G24580.1"/>
    <property type="gene ID" value="AT4G24580"/>
</dbReference>
<dbReference type="Gramene" id="AT4G24580.2">
    <property type="protein sequence ID" value="AT4G24580.2"/>
    <property type="gene ID" value="AT4G24580"/>
</dbReference>
<dbReference type="KEGG" id="ath:AT4G24580"/>
<dbReference type="Araport" id="AT4G24580"/>
<dbReference type="TAIR" id="AT4G24580">
    <property type="gene designation" value="REN1"/>
</dbReference>
<dbReference type="eggNOG" id="KOG4271">
    <property type="taxonomic scope" value="Eukaryota"/>
</dbReference>
<dbReference type="HOGENOM" id="CLU_011283_1_0_1"/>
<dbReference type="InParanoid" id="F4JQZ3"/>
<dbReference type="OMA" id="QCSHVEE"/>
<dbReference type="PRO" id="PR:F4JQZ3"/>
<dbReference type="Proteomes" id="UP000006548">
    <property type="component" value="Chromosome 4"/>
</dbReference>
<dbReference type="ExpressionAtlas" id="F4JQZ3">
    <property type="expression patterns" value="baseline and differential"/>
</dbReference>
<dbReference type="GO" id="GO:0045177">
    <property type="term" value="C:apical part of cell"/>
    <property type="evidence" value="ECO:0000314"/>
    <property type="project" value="TAIR"/>
</dbReference>
<dbReference type="GO" id="GO:0016324">
    <property type="term" value="C:apical plasma membrane"/>
    <property type="evidence" value="ECO:0000314"/>
    <property type="project" value="UniProtKB"/>
</dbReference>
<dbReference type="GO" id="GO:0005938">
    <property type="term" value="C:cell cortex"/>
    <property type="evidence" value="ECO:0000314"/>
    <property type="project" value="TAIR"/>
</dbReference>
<dbReference type="GO" id="GO:0070382">
    <property type="term" value="C:exocytic vesicle"/>
    <property type="evidence" value="ECO:0000314"/>
    <property type="project" value="TAIR"/>
</dbReference>
<dbReference type="GO" id="GO:0090406">
    <property type="term" value="C:pollen tube"/>
    <property type="evidence" value="ECO:0000314"/>
    <property type="project" value="TAIR"/>
</dbReference>
<dbReference type="GO" id="GO:0005096">
    <property type="term" value="F:GTPase activator activity"/>
    <property type="evidence" value="ECO:0000314"/>
    <property type="project" value="UniProtKB"/>
</dbReference>
<dbReference type="GO" id="GO:0031267">
    <property type="term" value="F:small GTPase binding"/>
    <property type="evidence" value="ECO:0000353"/>
    <property type="project" value="UniProtKB"/>
</dbReference>
<dbReference type="GO" id="GO:0090630">
    <property type="term" value="P:activation of GTPase activity"/>
    <property type="evidence" value="ECO:0000314"/>
    <property type="project" value="TAIR"/>
</dbReference>
<dbReference type="GO" id="GO:0035024">
    <property type="term" value="P:negative regulation of Rho protein signal transduction"/>
    <property type="evidence" value="ECO:0000315"/>
    <property type="project" value="TAIR"/>
</dbReference>
<dbReference type="GO" id="GO:0009846">
    <property type="term" value="P:pollen germination"/>
    <property type="evidence" value="ECO:0000315"/>
    <property type="project" value="TAIR"/>
</dbReference>
<dbReference type="GO" id="GO:0009865">
    <property type="term" value="P:pollen tube adhesion"/>
    <property type="evidence" value="ECO:0000315"/>
    <property type="project" value="TAIR"/>
</dbReference>
<dbReference type="GO" id="GO:0048868">
    <property type="term" value="P:pollen tube development"/>
    <property type="evidence" value="ECO:0000315"/>
    <property type="project" value="TAIR"/>
</dbReference>
<dbReference type="GO" id="GO:0009860">
    <property type="term" value="P:pollen tube growth"/>
    <property type="evidence" value="ECO:0000315"/>
    <property type="project" value="UniProtKB"/>
</dbReference>
<dbReference type="GO" id="GO:0043547">
    <property type="term" value="P:positive regulation of GTPase activity"/>
    <property type="evidence" value="ECO:0000314"/>
    <property type="project" value="UniProtKB"/>
</dbReference>
<dbReference type="GO" id="GO:0007165">
    <property type="term" value="P:signal transduction"/>
    <property type="evidence" value="ECO:0007669"/>
    <property type="project" value="InterPro"/>
</dbReference>
<dbReference type="CDD" id="cd00821">
    <property type="entry name" value="PH"/>
    <property type="match status" value="1"/>
</dbReference>
<dbReference type="CDD" id="cd00159">
    <property type="entry name" value="RhoGAP"/>
    <property type="match status" value="1"/>
</dbReference>
<dbReference type="FunFam" id="2.30.29.30:FF:000302">
    <property type="entry name" value="Rho GTPase-activating protein 7"/>
    <property type="match status" value="1"/>
</dbReference>
<dbReference type="Gene3D" id="2.30.29.30">
    <property type="entry name" value="Pleckstrin-homology domain (PH domain)/Phosphotyrosine-binding domain (PTB)"/>
    <property type="match status" value="1"/>
</dbReference>
<dbReference type="Gene3D" id="1.10.555.10">
    <property type="entry name" value="Rho GTPase activation protein"/>
    <property type="match status" value="1"/>
</dbReference>
<dbReference type="InterPro" id="IPR025757">
    <property type="entry name" value="MIP1_Leuzipper"/>
</dbReference>
<dbReference type="InterPro" id="IPR011993">
    <property type="entry name" value="PH-like_dom_sf"/>
</dbReference>
<dbReference type="InterPro" id="IPR001849">
    <property type="entry name" value="PH_domain"/>
</dbReference>
<dbReference type="InterPro" id="IPR052799">
    <property type="entry name" value="Rho_GAP_Regulators"/>
</dbReference>
<dbReference type="InterPro" id="IPR008936">
    <property type="entry name" value="Rho_GTPase_activation_prot"/>
</dbReference>
<dbReference type="InterPro" id="IPR000198">
    <property type="entry name" value="RhoGAP_dom"/>
</dbReference>
<dbReference type="PANTHER" id="PTHR46265">
    <property type="entry name" value="RHO GTPASE-ACTIVATING PROTEIN 7"/>
    <property type="match status" value="1"/>
</dbReference>
<dbReference type="PANTHER" id="PTHR46265:SF10">
    <property type="entry name" value="RHO GTPASE-ACTIVATING PROTEIN REN1"/>
    <property type="match status" value="1"/>
</dbReference>
<dbReference type="Pfam" id="PF14389">
    <property type="entry name" value="Lzipper-MIP1"/>
    <property type="match status" value="1"/>
</dbReference>
<dbReference type="Pfam" id="PF00169">
    <property type="entry name" value="PH"/>
    <property type="match status" value="1"/>
</dbReference>
<dbReference type="Pfam" id="PF00620">
    <property type="entry name" value="RhoGAP"/>
    <property type="match status" value="1"/>
</dbReference>
<dbReference type="SMART" id="SM00233">
    <property type="entry name" value="PH"/>
    <property type="match status" value="1"/>
</dbReference>
<dbReference type="SMART" id="SM00324">
    <property type="entry name" value="RhoGAP"/>
    <property type="match status" value="1"/>
</dbReference>
<dbReference type="SUPFAM" id="SSF48350">
    <property type="entry name" value="GTPase activation domain, GAP"/>
    <property type="match status" value="1"/>
</dbReference>
<dbReference type="SUPFAM" id="SSF50729">
    <property type="entry name" value="PH domain-like"/>
    <property type="match status" value="1"/>
</dbReference>
<dbReference type="PROSITE" id="PS50003">
    <property type="entry name" value="PH_DOMAIN"/>
    <property type="match status" value="1"/>
</dbReference>
<dbReference type="PROSITE" id="PS50238">
    <property type="entry name" value="RHOGAP"/>
    <property type="match status" value="1"/>
</dbReference>
<name>REN1_ARATH</name>
<evidence type="ECO:0000255" key="1"/>
<evidence type="ECO:0000255" key="2">
    <source>
        <dbReference type="PROSITE-ProRule" id="PRU00145"/>
    </source>
</evidence>
<evidence type="ECO:0000255" key="3">
    <source>
        <dbReference type="PROSITE-ProRule" id="PRU00172"/>
    </source>
</evidence>
<evidence type="ECO:0000256" key="4">
    <source>
        <dbReference type="SAM" id="MobiDB-lite"/>
    </source>
</evidence>
<evidence type="ECO:0000269" key="5">
    <source>
    </source>
</evidence>
<evidence type="ECO:0000305" key="6"/>
<evidence type="ECO:0000305" key="7">
    <source>
    </source>
</evidence>
<keyword id="KW-1003">Cell membrane</keyword>
<keyword id="KW-0175">Coiled coil</keyword>
<keyword id="KW-0341">Growth regulation</keyword>
<keyword id="KW-0343">GTPase activation</keyword>
<keyword id="KW-0472">Membrane</keyword>
<keyword id="KW-1185">Reference proteome</keyword>
<protein>
    <recommendedName>
        <fullName>Rho GTPase-activating protein REN1</fullName>
    </recommendedName>
    <alternativeName>
        <fullName>Protein ROP1 ENHANCER 1</fullName>
    </alternativeName>
    <alternativeName>
        <fullName>Rho-type GTPase-activating protein REN1</fullName>
    </alternativeName>
</protein>
<reference key="1">
    <citation type="journal article" date="1999" name="Nature">
        <title>Sequence and analysis of chromosome 4 of the plant Arabidopsis thaliana.</title>
        <authorList>
            <person name="Mayer K.F.X."/>
            <person name="Schueller C."/>
            <person name="Wambutt R."/>
            <person name="Murphy G."/>
            <person name="Volckaert G."/>
            <person name="Pohl T."/>
            <person name="Duesterhoeft A."/>
            <person name="Stiekema W."/>
            <person name="Entian K.-D."/>
            <person name="Terryn N."/>
            <person name="Harris B."/>
            <person name="Ansorge W."/>
            <person name="Brandt P."/>
            <person name="Grivell L.A."/>
            <person name="Rieger M."/>
            <person name="Weichselgartner M."/>
            <person name="de Simone V."/>
            <person name="Obermaier B."/>
            <person name="Mache R."/>
            <person name="Mueller M."/>
            <person name="Kreis M."/>
            <person name="Delseny M."/>
            <person name="Puigdomenech P."/>
            <person name="Watson M."/>
            <person name="Schmidtheini T."/>
            <person name="Reichert B."/>
            <person name="Portetelle D."/>
            <person name="Perez-Alonso M."/>
            <person name="Boutry M."/>
            <person name="Bancroft I."/>
            <person name="Vos P."/>
            <person name="Hoheisel J."/>
            <person name="Zimmermann W."/>
            <person name="Wedler H."/>
            <person name="Ridley P."/>
            <person name="Langham S.-A."/>
            <person name="McCullagh B."/>
            <person name="Bilham L."/>
            <person name="Robben J."/>
            <person name="van der Schueren J."/>
            <person name="Grymonprez B."/>
            <person name="Chuang Y.-J."/>
            <person name="Vandenbussche F."/>
            <person name="Braeken M."/>
            <person name="Weltjens I."/>
            <person name="Voet M."/>
            <person name="Bastiaens I."/>
            <person name="Aert R."/>
            <person name="Defoor E."/>
            <person name="Weitzenegger T."/>
            <person name="Bothe G."/>
            <person name="Ramsperger U."/>
            <person name="Hilbert H."/>
            <person name="Braun M."/>
            <person name="Holzer E."/>
            <person name="Brandt A."/>
            <person name="Peters S."/>
            <person name="van Staveren M."/>
            <person name="Dirkse W."/>
            <person name="Mooijman P."/>
            <person name="Klein Lankhorst R."/>
            <person name="Rose M."/>
            <person name="Hauf J."/>
            <person name="Koetter P."/>
            <person name="Berneiser S."/>
            <person name="Hempel S."/>
            <person name="Feldpausch M."/>
            <person name="Lamberth S."/>
            <person name="Van den Daele H."/>
            <person name="De Keyser A."/>
            <person name="Buysshaert C."/>
            <person name="Gielen J."/>
            <person name="Villarroel R."/>
            <person name="De Clercq R."/>
            <person name="van Montagu M."/>
            <person name="Rogers J."/>
            <person name="Cronin A."/>
            <person name="Quail M.A."/>
            <person name="Bray-Allen S."/>
            <person name="Clark L."/>
            <person name="Doggett J."/>
            <person name="Hall S."/>
            <person name="Kay M."/>
            <person name="Lennard N."/>
            <person name="McLay K."/>
            <person name="Mayes R."/>
            <person name="Pettett A."/>
            <person name="Rajandream M.A."/>
            <person name="Lyne M."/>
            <person name="Benes V."/>
            <person name="Rechmann S."/>
            <person name="Borkova D."/>
            <person name="Bloecker H."/>
            <person name="Scharfe M."/>
            <person name="Grimm M."/>
            <person name="Loehnert T.-H."/>
            <person name="Dose S."/>
            <person name="de Haan M."/>
            <person name="Maarse A.C."/>
            <person name="Schaefer M."/>
            <person name="Mueller-Auer S."/>
            <person name="Gabel C."/>
            <person name="Fuchs M."/>
            <person name="Fartmann B."/>
            <person name="Granderath K."/>
            <person name="Dauner D."/>
            <person name="Herzl A."/>
            <person name="Neumann S."/>
            <person name="Argiriou A."/>
            <person name="Vitale D."/>
            <person name="Liguori R."/>
            <person name="Piravandi E."/>
            <person name="Massenet O."/>
            <person name="Quigley F."/>
            <person name="Clabauld G."/>
            <person name="Muendlein A."/>
            <person name="Felber R."/>
            <person name="Schnabl S."/>
            <person name="Hiller R."/>
            <person name="Schmidt W."/>
            <person name="Lecharny A."/>
            <person name="Aubourg S."/>
            <person name="Chefdor F."/>
            <person name="Cooke R."/>
            <person name="Berger C."/>
            <person name="Monfort A."/>
            <person name="Casacuberta E."/>
            <person name="Gibbons T."/>
            <person name="Weber N."/>
            <person name="Vandenbol M."/>
            <person name="Bargues M."/>
            <person name="Terol J."/>
            <person name="Torres A."/>
            <person name="Perez-Perez A."/>
            <person name="Purnelle B."/>
            <person name="Bent E."/>
            <person name="Johnson S."/>
            <person name="Tacon D."/>
            <person name="Jesse T."/>
            <person name="Heijnen L."/>
            <person name="Schwarz S."/>
            <person name="Scholler P."/>
            <person name="Heber S."/>
            <person name="Francs P."/>
            <person name="Bielke C."/>
            <person name="Frishman D."/>
            <person name="Haase D."/>
            <person name="Lemcke K."/>
            <person name="Mewes H.-W."/>
            <person name="Stocker S."/>
            <person name="Zaccaria P."/>
            <person name="Bevan M."/>
            <person name="Wilson R.K."/>
            <person name="de la Bastide M."/>
            <person name="Habermann K."/>
            <person name="Parnell L."/>
            <person name="Dedhia N."/>
            <person name="Gnoj L."/>
            <person name="Schutz K."/>
            <person name="Huang E."/>
            <person name="Spiegel L."/>
            <person name="Sekhon M."/>
            <person name="Murray J."/>
            <person name="Sheet P."/>
            <person name="Cordes M."/>
            <person name="Abu-Threideh J."/>
            <person name="Stoneking T."/>
            <person name="Kalicki J."/>
            <person name="Graves T."/>
            <person name="Harmon G."/>
            <person name="Edwards J."/>
            <person name="Latreille P."/>
            <person name="Courtney L."/>
            <person name="Cloud J."/>
            <person name="Abbott A."/>
            <person name="Scott K."/>
            <person name="Johnson D."/>
            <person name="Minx P."/>
            <person name="Bentley D."/>
            <person name="Fulton B."/>
            <person name="Miller N."/>
            <person name="Greco T."/>
            <person name="Kemp K."/>
            <person name="Kramer J."/>
            <person name="Fulton L."/>
            <person name="Mardis E."/>
            <person name="Dante M."/>
            <person name="Pepin K."/>
            <person name="Hillier L.W."/>
            <person name="Nelson J."/>
            <person name="Spieth J."/>
            <person name="Ryan E."/>
            <person name="Andrews S."/>
            <person name="Geisel C."/>
            <person name="Layman D."/>
            <person name="Du H."/>
            <person name="Ali J."/>
            <person name="Berghoff A."/>
            <person name="Jones K."/>
            <person name="Drone K."/>
            <person name="Cotton M."/>
            <person name="Joshu C."/>
            <person name="Antonoiu B."/>
            <person name="Zidanic M."/>
            <person name="Strong C."/>
            <person name="Sun H."/>
            <person name="Lamar B."/>
            <person name="Yordan C."/>
            <person name="Ma P."/>
            <person name="Zhong J."/>
            <person name="Preston R."/>
            <person name="Vil D."/>
            <person name="Shekher M."/>
            <person name="Matero A."/>
            <person name="Shah R."/>
            <person name="Swaby I.K."/>
            <person name="O'Shaughnessy A."/>
            <person name="Rodriguez M."/>
            <person name="Hoffman J."/>
            <person name="Till S."/>
            <person name="Granat S."/>
            <person name="Shohdy N."/>
            <person name="Hasegawa A."/>
            <person name="Hameed A."/>
            <person name="Lodhi M."/>
            <person name="Johnson A."/>
            <person name="Chen E."/>
            <person name="Marra M.A."/>
            <person name="Martienssen R."/>
            <person name="McCombie W.R."/>
        </authorList>
    </citation>
    <scope>NUCLEOTIDE SEQUENCE [LARGE SCALE GENOMIC DNA]</scope>
    <source>
        <strain>cv. Columbia</strain>
    </source>
</reference>
<reference key="2">
    <citation type="journal article" date="2017" name="Plant J.">
        <title>Araport11: a complete reannotation of the Arabidopsis thaliana reference genome.</title>
        <authorList>
            <person name="Cheng C.Y."/>
            <person name="Krishnakumar V."/>
            <person name="Chan A.P."/>
            <person name="Thibaud-Nissen F."/>
            <person name="Schobel S."/>
            <person name="Town C.D."/>
        </authorList>
    </citation>
    <scope>GENOME REANNOTATION</scope>
    <source>
        <strain>cv. Columbia</strain>
    </source>
</reference>
<reference key="3">
    <citation type="journal article" date="2008" name="Curr. Biol.">
        <title>A tip-localized RhoGAP controls cell polarity by globally inhibiting Rho GTPase at the cell apex.</title>
        <authorList>
            <person name="Hwang J.U."/>
            <person name="Vernoud V."/>
            <person name="Szumlanski A."/>
            <person name="Nielsen E."/>
            <person name="Yang Z."/>
        </authorList>
    </citation>
    <scope>FUNCTION</scope>
    <scope>INTERACTION WITH ARAC11/ROP1</scope>
    <scope>SUBCELLULAR LOCATION</scope>
    <scope>TISSUE SPECIFICITY</scope>
    <scope>DISRUPTION PHENOTYPE</scope>
    <scope>MUTAGENESIS OF ARG-244</scope>
</reference>
<feature type="chain" id="PRO_0000422723" description="Rho GTPase-activating protein REN1">
    <location>
        <begin position="1"/>
        <end position="920"/>
    </location>
</feature>
<feature type="domain" description="PH" evidence="2">
    <location>
        <begin position="60"/>
        <end position="167"/>
    </location>
</feature>
<feature type="domain" description="Rho-GAP" evidence="3">
    <location>
        <begin position="213"/>
        <end position="412"/>
    </location>
</feature>
<feature type="region of interest" description="Disordered" evidence="4">
    <location>
        <begin position="1"/>
        <end position="64"/>
    </location>
</feature>
<feature type="region of interest" description="Disordered" evidence="4">
    <location>
        <begin position="417"/>
        <end position="592"/>
    </location>
</feature>
<feature type="region of interest" description="Disordered" evidence="4">
    <location>
        <begin position="719"/>
        <end position="825"/>
    </location>
</feature>
<feature type="region of interest" description="Disordered" evidence="4">
    <location>
        <begin position="837"/>
        <end position="920"/>
    </location>
</feature>
<feature type="coiled-coil region" evidence="1">
    <location>
        <begin position="598"/>
        <end position="728"/>
    </location>
</feature>
<feature type="compositionally biased region" description="Polar residues" evidence="4">
    <location>
        <begin position="1"/>
        <end position="10"/>
    </location>
</feature>
<feature type="compositionally biased region" description="Low complexity" evidence="4">
    <location>
        <begin position="17"/>
        <end position="31"/>
    </location>
</feature>
<feature type="compositionally biased region" description="Polar residues" evidence="4">
    <location>
        <begin position="45"/>
        <end position="64"/>
    </location>
</feature>
<feature type="compositionally biased region" description="Acidic residues" evidence="4">
    <location>
        <begin position="434"/>
        <end position="463"/>
    </location>
</feature>
<feature type="compositionally biased region" description="Polar residues" evidence="4">
    <location>
        <begin position="464"/>
        <end position="473"/>
    </location>
</feature>
<feature type="compositionally biased region" description="Basic and acidic residues" evidence="4">
    <location>
        <begin position="475"/>
        <end position="491"/>
    </location>
</feature>
<feature type="compositionally biased region" description="Basic and acidic residues" evidence="4">
    <location>
        <begin position="499"/>
        <end position="509"/>
    </location>
</feature>
<feature type="compositionally biased region" description="Basic and acidic residues" evidence="4">
    <location>
        <begin position="520"/>
        <end position="532"/>
    </location>
</feature>
<feature type="compositionally biased region" description="Polar residues" evidence="4">
    <location>
        <begin position="555"/>
        <end position="568"/>
    </location>
</feature>
<feature type="compositionally biased region" description="Basic residues" evidence="4">
    <location>
        <begin position="577"/>
        <end position="586"/>
    </location>
</feature>
<feature type="compositionally biased region" description="Basic and acidic residues" evidence="4">
    <location>
        <begin position="734"/>
        <end position="768"/>
    </location>
</feature>
<feature type="compositionally biased region" description="Basic and acidic residues" evidence="4">
    <location>
        <begin position="776"/>
        <end position="788"/>
    </location>
</feature>
<feature type="compositionally biased region" description="Low complexity" evidence="4">
    <location>
        <begin position="814"/>
        <end position="825"/>
    </location>
</feature>
<feature type="compositionally biased region" description="Polar residues" evidence="4">
    <location>
        <begin position="854"/>
        <end position="864"/>
    </location>
</feature>
<feature type="compositionally biased region" description="Polar residues" evidence="4">
    <location>
        <begin position="872"/>
        <end position="885"/>
    </location>
</feature>
<feature type="compositionally biased region" description="Basic and acidic residues" evidence="4">
    <location>
        <begin position="889"/>
        <end position="903"/>
    </location>
</feature>
<feature type="compositionally biased region" description="Polar residues" evidence="4">
    <location>
        <begin position="910"/>
        <end position="920"/>
    </location>
</feature>
<feature type="site" description="Arginine finger; crucial for GTP hydrolysis by stabilizing the transition state" evidence="3">
    <location>
        <position position="244"/>
    </location>
</feature>
<feature type="mutagenesis site" description="Loss of function as activator." evidence="5">
    <original>R</original>
    <variation>L</variation>
    <location>
        <position position="244"/>
    </location>
</feature>
<sequence length="920" mass="100627">MANKNAESSSQPPPHVQPNQQQQQQPPIANEQEQEPHGDTCSIPPAQSGNTDSRSRGGNTVFKSGPLSISSKGIGWTSWKKRWFILTRTSLVFFRSDPSAVQQKGSEVNLTLGGIDLNNSGSVVVKADKKLLTVLFPDGRDGRAFTLKADTMEDLHEWKAALENALTQAPSASHVMGQNGIFRNDHADPAVGVDEKKDETPTKSTVLGRPVLLALEDVDGAPSFLEKALRFVENHGVRIEGILRQAADVDDVEHRIREYEKGKNEFSPEEDAHIIADCLKYFLRELPSSPVPASCCNALLEACRTDRGNRVNAMRAAICESFPEPNRRLLQRILMMMQTVASNKTVNRMNTNAVAACMAPLLLRPLLAGDCEIENDFDVGGDGSMQLLQAAAAANHAQAIVITLLEEYESIFGEGSLSPGLYSDSEESGSGTEEGSDDEEYDDDDDGSQGSEDYTDEEEDLENESNGSYSESAASEDKYADSIDPDDHKINDNLSTESKSPKRSKEPKKLLSGSRRSSLPRHDDGKKDEDIVVKGVNNTEVKAVVEVSTSEDKNSSTSDVASDTQKPSKLSDAPGGSKRHWGRTPGKKNLSMESIDFSVEVDEDNADIERLESTKLELQSRITEEVKSNAVLQASLERRKKALYGRRQALEQDVGRLQEQLQQERDRKLALETGLNMSKGNQPIPETIDENLKKDLQEVAQAEADIAKLEHKVDDLENRLGHHDGKASGSTHSASKESRKLPEHNAKMKEKQKDTEAASTHISERSTSKDGQGAARENETEKQQDSRSKSSQQETSRGSSKLVGLSKRSGTKGEGSTTTTSALSKLTMRLNFLKERRSQIANELQNMDKGKTLGQPSPTSGQNRVSEETEKGSGSNQDPDSSKLQSPHILDRGRSENGGDRGRGSSGGNHPNTTPRTFSR</sequence>
<gene>
    <name type="primary">REN1</name>
    <name type="ordered locus">At4g24580</name>
    <name type="ORF">F22K18.2200</name>
</gene>